<keyword id="KW-0378">Hydrolase</keyword>
<keyword id="KW-0479">Metal-binding</keyword>
<keyword id="KW-1185">Reference proteome</keyword>
<keyword id="KW-0862">Zinc</keyword>
<feature type="chain" id="PRO_1000185431" description="Probable phosphatase YcdX">
    <location>
        <begin position="1"/>
        <end position="245"/>
    </location>
</feature>
<feature type="binding site" evidence="1">
    <location>
        <position position="7"/>
    </location>
    <ligand>
        <name>Zn(2+)</name>
        <dbReference type="ChEBI" id="CHEBI:29105"/>
        <label>1</label>
    </ligand>
</feature>
<feature type="binding site" evidence="1">
    <location>
        <position position="9"/>
    </location>
    <ligand>
        <name>Zn(2+)</name>
        <dbReference type="ChEBI" id="CHEBI:29105"/>
        <label>1</label>
    </ligand>
</feature>
<feature type="binding site" evidence="1">
    <location>
        <position position="15"/>
    </location>
    <ligand>
        <name>Zn(2+)</name>
        <dbReference type="ChEBI" id="CHEBI:29105"/>
        <label>2</label>
    </ligand>
</feature>
<feature type="binding site" evidence="1">
    <location>
        <position position="40"/>
    </location>
    <ligand>
        <name>Zn(2+)</name>
        <dbReference type="ChEBI" id="CHEBI:29105"/>
        <label>2</label>
    </ligand>
</feature>
<feature type="binding site" evidence="1">
    <location>
        <position position="73"/>
    </location>
    <ligand>
        <name>Zn(2+)</name>
        <dbReference type="ChEBI" id="CHEBI:29105"/>
        <label>1</label>
    </ligand>
</feature>
<feature type="binding site" evidence="1">
    <location>
        <position position="73"/>
    </location>
    <ligand>
        <name>Zn(2+)</name>
        <dbReference type="ChEBI" id="CHEBI:29105"/>
        <label>3</label>
    </ligand>
</feature>
<feature type="binding site" evidence="1">
    <location>
        <position position="101"/>
    </location>
    <ligand>
        <name>Zn(2+)</name>
        <dbReference type="ChEBI" id="CHEBI:29105"/>
        <label>3</label>
    </ligand>
</feature>
<feature type="binding site" evidence="1">
    <location>
        <position position="131"/>
    </location>
    <ligand>
        <name>Zn(2+)</name>
        <dbReference type="ChEBI" id="CHEBI:29105"/>
        <label>3</label>
    </ligand>
</feature>
<feature type="binding site" evidence="1">
    <location>
        <position position="192"/>
    </location>
    <ligand>
        <name>Zn(2+)</name>
        <dbReference type="ChEBI" id="CHEBI:29105"/>
        <label>1</label>
    </ligand>
</feature>
<feature type="binding site" evidence="1">
    <location>
        <position position="194"/>
    </location>
    <ligand>
        <name>Zn(2+)</name>
        <dbReference type="ChEBI" id="CHEBI:29105"/>
        <label>2</label>
    </ligand>
</feature>
<evidence type="ECO:0000255" key="1">
    <source>
        <dbReference type="HAMAP-Rule" id="MF_01561"/>
    </source>
</evidence>
<accession>B7LFE4</accession>
<name>YCDX_ECO55</name>
<reference key="1">
    <citation type="journal article" date="2009" name="PLoS Genet.">
        <title>Organised genome dynamics in the Escherichia coli species results in highly diverse adaptive paths.</title>
        <authorList>
            <person name="Touchon M."/>
            <person name="Hoede C."/>
            <person name="Tenaillon O."/>
            <person name="Barbe V."/>
            <person name="Baeriswyl S."/>
            <person name="Bidet P."/>
            <person name="Bingen E."/>
            <person name="Bonacorsi S."/>
            <person name="Bouchier C."/>
            <person name="Bouvet O."/>
            <person name="Calteau A."/>
            <person name="Chiapello H."/>
            <person name="Clermont O."/>
            <person name="Cruveiller S."/>
            <person name="Danchin A."/>
            <person name="Diard M."/>
            <person name="Dossat C."/>
            <person name="Karoui M.E."/>
            <person name="Frapy E."/>
            <person name="Garry L."/>
            <person name="Ghigo J.M."/>
            <person name="Gilles A.M."/>
            <person name="Johnson J."/>
            <person name="Le Bouguenec C."/>
            <person name="Lescat M."/>
            <person name="Mangenot S."/>
            <person name="Martinez-Jehanne V."/>
            <person name="Matic I."/>
            <person name="Nassif X."/>
            <person name="Oztas S."/>
            <person name="Petit M.A."/>
            <person name="Pichon C."/>
            <person name="Rouy Z."/>
            <person name="Ruf C.S."/>
            <person name="Schneider D."/>
            <person name="Tourret J."/>
            <person name="Vacherie B."/>
            <person name="Vallenet D."/>
            <person name="Medigue C."/>
            <person name="Rocha E.P.C."/>
            <person name="Denamur E."/>
        </authorList>
    </citation>
    <scope>NUCLEOTIDE SEQUENCE [LARGE SCALE GENOMIC DNA]</scope>
    <source>
        <strain>55989 / EAEC</strain>
    </source>
</reference>
<proteinExistence type="inferred from homology"/>
<gene>
    <name evidence="1" type="primary">ycdX</name>
    <name type="ordered locus">EC55989_1147</name>
</gene>
<organism>
    <name type="scientific">Escherichia coli (strain 55989 / EAEC)</name>
    <dbReference type="NCBI Taxonomy" id="585055"/>
    <lineage>
        <taxon>Bacteria</taxon>
        <taxon>Pseudomonadati</taxon>
        <taxon>Pseudomonadota</taxon>
        <taxon>Gammaproteobacteria</taxon>
        <taxon>Enterobacterales</taxon>
        <taxon>Enterobacteriaceae</taxon>
        <taxon>Escherichia</taxon>
    </lineage>
</organism>
<protein>
    <recommendedName>
        <fullName evidence="1">Probable phosphatase YcdX</fullName>
        <ecNumber evidence="1">3.1.3.-</ecNumber>
    </recommendedName>
</protein>
<comment type="cofactor">
    <cofactor evidence="1">
        <name>Zn(2+)</name>
        <dbReference type="ChEBI" id="CHEBI:29105"/>
    </cofactor>
    <text evidence="1">Binds 3 Zn(2+) ions per subunit.</text>
</comment>
<comment type="subunit">
    <text evidence="1">Homotrimer.</text>
</comment>
<comment type="similarity">
    <text evidence="1">Belongs to the PHP family.</text>
</comment>
<dbReference type="EC" id="3.1.3.-" evidence="1"/>
<dbReference type="EMBL" id="CU928145">
    <property type="protein sequence ID" value="CAU97006.1"/>
    <property type="molecule type" value="Genomic_DNA"/>
</dbReference>
<dbReference type="RefSeq" id="WP_000283664.1">
    <property type="nucleotide sequence ID" value="NC_011748.1"/>
</dbReference>
<dbReference type="SMR" id="B7LFE4"/>
<dbReference type="GeneID" id="93776384"/>
<dbReference type="KEGG" id="eck:EC55989_1147"/>
<dbReference type="HOGENOM" id="CLU_061999_0_1_6"/>
<dbReference type="Proteomes" id="UP000000746">
    <property type="component" value="Chromosome"/>
</dbReference>
<dbReference type="GO" id="GO:0005829">
    <property type="term" value="C:cytosol"/>
    <property type="evidence" value="ECO:0007669"/>
    <property type="project" value="TreeGrafter"/>
</dbReference>
<dbReference type="GO" id="GO:0016791">
    <property type="term" value="F:phosphatase activity"/>
    <property type="evidence" value="ECO:0007669"/>
    <property type="project" value="UniProtKB-UniRule"/>
</dbReference>
<dbReference type="GO" id="GO:0008270">
    <property type="term" value="F:zinc ion binding"/>
    <property type="evidence" value="ECO:0007669"/>
    <property type="project" value="UniProtKB-UniRule"/>
</dbReference>
<dbReference type="GO" id="GO:0071978">
    <property type="term" value="P:bacterial-type flagellum-dependent swarming motility"/>
    <property type="evidence" value="ECO:0007669"/>
    <property type="project" value="TreeGrafter"/>
</dbReference>
<dbReference type="CDD" id="cd07437">
    <property type="entry name" value="PHP_HisPPase_Ycdx_like"/>
    <property type="match status" value="1"/>
</dbReference>
<dbReference type="FunFam" id="3.20.20.140:FF:000008">
    <property type="entry name" value="Probable phosphatase YcdX"/>
    <property type="match status" value="1"/>
</dbReference>
<dbReference type="Gene3D" id="3.20.20.140">
    <property type="entry name" value="Metal-dependent hydrolases"/>
    <property type="match status" value="1"/>
</dbReference>
<dbReference type="HAMAP" id="MF_01561">
    <property type="entry name" value="YcdX_phosphat"/>
    <property type="match status" value="1"/>
</dbReference>
<dbReference type="InterPro" id="IPR023710">
    <property type="entry name" value="Phosphatase_YcdX_put"/>
</dbReference>
<dbReference type="InterPro" id="IPR004013">
    <property type="entry name" value="PHP_dom"/>
</dbReference>
<dbReference type="InterPro" id="IPR050243">
    <property type="entry name" value="PHP_phosphatase"/>
</dbReference>
<dbReference type="InterPro" id="IPR003141">
    <property type="entry name" value="Pol/His_phosphatase_N"/>
</dbReference>
<dbReference type="InterPro" id="IPR016195">
    <property type="entry name" value="Pol/histidinol_Pase-like"/>
</dbReference>
<dbReference type="NCBIfam" id="NF006702">
    <property type="entry name" value="PRK09248.1"/>
    <property type="match status" value="1"/>
</dbReference>
<dbReference type="PANTHER" id="PTHR36928">
    <property type="entry name" value="PHOSPHATASE YCDX-RELATED"/>
    <property type="match status" value="1"/>
</dbReference>
<dbReference type="PANTHER" id="PTHR36928:SF1">
    <property type="entry name" value="PHOSPHATASE YCDX-RELATED"/>
    <property type="match status" value="1"/>
</dbReference>
<dbReference type="Pfam" id="PF02811">
    <property type="entry name" value="PHP"/>
    <property type="match status" value="1"/>
</dbReference>
<dbReference type="SMART" id="SM00481">
    <property type="entry name" value="POLIIIAc"/>
    <property type="match status" value="1"/>
</dbReference>
<dbReference type="SUPFAM" id="SSF89550">
    <property type="entry name" value="PHP domain-like"/>
    <property type="match status" value="1"/>
</dbReference>
<sequence>MYPVDLHMHTVASTHAYSTLSDYIAQAKQKGIKLFAITDHGPDMEDAPHHWHFINMRIWPRVVDGVGILRGIEANIKNVDGEIDCSGKMFDSLDLIIAGFHEPVFAPHDKATNTQAMIATIASGNVHIISHPGNPKYEIDVKAVAEAAAKHQVALEINNSSFLHSRKGSEDNCRAVAAAVRDAGGWVALGSDSHTAFTMGEFEECLKILDAVDFPPERILNVSPRRLLNFLESRGMAPIAEFADL</sequence>